<accession>A8FF40</accession>
<sequence length="448" mass="49168">MKHRYLPQTEQDQKEMLDVIGVQSIDELFSDIPEKVRFKGAYNIKPAASETELVRELSQLAAKNKDTVSYASFLGAGVYDHYQPVIVDHVISRSEFYTAYTPYQPEISQGELQAIFEFQTMIAELTGMDLANSSMYDGGTALAEAAMLAAGHTKKKKVVVSETVHPEARAVLKTYAKGQHIEVVEVPAKKGQTDLAALEKAVCDETAAVLVQYPNFFGVVEPLKDIEPIAHKGKSLFVVSSNPLALGLLTPPGKLGADIVVGDAQPFGIPAAFGGPHCGYFAVTKKLMRKVPGRLVGQTEDENGVRGFVLTLQAREQHIRRDKATSNICSNQALNALAASVAMTALGKTGIKDIAYQNVQKAHYAKTQAETYGLLADVEGTHFNEFVIKLQEPVQEVNKRLLEKGIIGGYDLGRDYPELQHHMLVAVTELRTKEEIDTFIKELGDRHE</sequence>
<organism>
    <name type="scientific">Bacillus pumilus (strain SAFR-032)</name>
    <dbReference type="NCBI Taxonomy" id="315750"/>
    <lineage>
        <taxon>Bacteria</taxon>
        <taxon>Bacillati</taxon>
        <taxon>Bacillota</taxon>
        <taxon>Bacilli</taxon>
        <taxon>Bacillales</taxon>
        <taxon>Bacillaceae</taxon>
        <taxon>Bacillus</taxon>
    </lineage>
</organism>
<name>GCSPA_BACP2</name>
<reference key="1">
    <citation type="journal article" date="2007" name="PLoS ONE">
        <title>Paradoxical DNA repair and peroxide resistance gene conservation in Bacillus pumilus SAFR-032.</title>
        <authorList>
            <person name="Gioia J."/>
            <person name="Yerrapragada S."/>
            <person name="Qin X."/>
            <person name="Jiang H."/>
            <person name="Igboeli O.C."/>
            <person name="Muzny D."/>
            <person name="Dugan-Rocha S."/>
            <person name="Ding Y."/>
            <person name="Hawes A."/>
            <person name="Liu W."/>
            <person name="Perez L."/>
            <person name="Kovar C."/>
            <person name="Dinh H."/>
            <person name="Lee S."/>
            <person name="Nazareth L."/>
            <person name="Blyth P."/>
            <person name="Holder M."/>
            <person name="Buhay C."/>
            <person name="Tirumalai M.R."/>
            <person name="Liu Y."/>
            <person name="Dasgupta I."/>
            <person name="Bokhetache L."/>
            <person name="Fujita M."/>
            <person name="Karouia F."/>
            <person name="Eswara Moorthy P."/>
            <person name="Siefert J."/>
            <person name="Uzman A."/>
            <person name="Buzumbo P."/>
            <person name="Verma A."/>
            <person name="Zwiya H."/>
            <person name="McWilliams B.D."/>
            <person name="Olowu A."/>
            <person name="Clinkenbeard K.D."/>
            <person name="Newcombe D."/>
            <person name="Golebiewski L."/>
            <person name="Petrosino J.F."/>
            <person name="Nicholson W.L."/>
            <person name="Fox G.E."/>
            <person name="Venkateswaran K."/>
            <person name="Highlander S.K."/>
            <person name="Weinstock G.M."/>
        </authorList>
    </citation>
    <scope>NUCLEOTIDE SEQUENCE [LARGE SCALE GENOMIC DNA]</scope>
    <source>
        <strain>SAFR-032</strain>
    </source>
</reference>
<gene>
    <name evidence="1" type="primary">gcvPA</name>
    <name type="ordered locus">BPUM_2188</name>
</gene>
<protein>
    <recommendedName>
        <fullName evidence="1">Probable glycine dehydrogenase (decarboxylating) subunit 1</fullName>
        <ecNumber evidence="1">1.4.4.2</ecNumber>
    </recommendedName>
    <alternativeName>
        <fullName evidence="1">Glycine cleavage system P-protein subunit 1</fullName>
    </alternativeName>
    <alternativeName>
        <fullName evidence="1">Glycine decarboxylase subunit 1</fullName>
    </alternativeName>
    <alternativeName>
        <fullName evidence="1">Glycine dehydrogenase (aminomethyl-transferring) subunit 1</fullName>
    </alternativeName>
</protein>
<keyword id="KW-0560">Oxidoreductase</keyword>
<comment type="function">
    <text evidence="1">The glycine cleavage system catalyzes the degradation of glycine. The P protein binds the alpha-amino group of glycine through its pyridoxal phosphate cofactor; CO(2) is released and the remaining methylamine moiety is then transferred to the lipoamide cofactor of the H protein.</text>
</comment>
<comment type="catalytic activity">
    <reaction evidence="1">
        <text>N(6)-[(R)-lipoyl]-L-lysyl-[glycine-cleavage complex H protein] + glycine + H(+) = N(6)-[(R)-S(8)-aminomethyldihydrolipoyl]-L-lysyl-[glycine-cleavage complex H protein] + CO2</text>
        <dbReference type="Rhea" id="RHEA:24304"/>
        <dbReference type="Rhea" id="RHEA-COMP:10494"/>
        <dbReference type="Rhea" id="RHEA-COMP:10495"/>
        <dbReference type="ChEBI" id="CHEBI:15378"/>
        <dbReference type="ChEBI" id="CHEBI:16526"/>
        <dbReference type="ChEBI" id="CHEBI:57305"/>
        <dbReference type="ChEBI" id="CHEBI:83099"/>
        <dbReference type="ChEBI" id="CHEBI:83143"/>
        <dbReference type="EC" id="1.4.4.2"/>
    </reaction>
</comment>
<comment type="subunit">
    <text evidence="1">The glycine cleavage system is composed of four proteins: P, T, L and H. In this organism, the P 'protein' is a heterodimer of two subunits.</text>
</comment>
<comment type="similarity">
    <text evidence="1">Belongs to the GcvP family. N-terminal subunit subfamily.</text>
</comment>
<dbReference type="EC" id="1.4.4.2" evidence="1"/>
<dbReference type="EMBL" id="CP000813">
    <property type="protein sequence ID" value="ABV62857.1"/>
    <property type="molecule type" value="Genomic_DNA"/>
</dbReference>
<dbReference type="RefSeq" id="WP_012010551.1">
    <property type="nucleotide sequence ID" value="NC_009848.4"/>
</dbReference>
<dbReference type="SMR" id="A8FF40"/>
<dbReference type="STRING" id="315750.BPUM_2188"/>
<dbReference type="GeneID" id="5621454"/>
<dbReference type="KEGG" id="bpu:BPUM_2188"/>
<dbReference type="eggNOG" id="COG0403">
    <property type="taxonomic scope" value="Bacteria"/>
</dbReference>
<dbReference type="HOGENOM" id="CLU_004620_0_2_9"/>
<dbReference type="OrthoDB" id="9771867at2"/>
<dbReference type="Proteomes" id="UP000001355">
    <property type="component" value="Chromosome"/>
</dbReference>
<dbReference type="GO" id="GO:0004375">
    <property type="term" value="F:glycine dehydrogenase (decarboxylating) activity"/>
    <property type="evidence" value="ECO:0007669"/>
    <property type="project" value="UniProtKB-EC"/>
</dbReference>
<dbReference type="GO" id="GO:0019464">
    <property type="term" value="P:glycine decarboxylation via glycine cleavage system"/>
    <property type="evidence" value="ECO:0007669"/>
    <property type="project" value="UniProtKB-UniRule"/>
</dbReference>
<dbReference type="GO" id="GO:0009116">
    <property type="term" value="P:nucleoside metabolic process"/>
    <property type="evidence" value="ECO:0007669"/>
    <property type="project" value="InterPro"/>
</dbReference>
<dbReference type="CDD" id="cd00613">
    <property type="entry name" value="GDC-P"/>
    <property type="match status" value="1"/>
</dbReference>
<dbReference type="FunFam" id="3.40.640.10:FF:000113">
    <property type="entry name" value="Probable glycine dehydrogenase (decarboxylating) subunit 1"/>
    <property type="match status" value="1"/>
</dbReference>
<dbReference type="Gene3D" id="3.90.1150.10">
    <property type="entry name" value="Aspartate Aminotransferase, domain 1"/>
    <property type="match status" value="1"/>
</dbReference>
<dbReference type="Gene3D" id="3.40.640.10">
    <property type="entry name" value="Type I PLP-dependent aspartate aminotransferase-like (Major domain)"/>
    <property type="match status" value="1"/>
</dbReference>
<dbReference type="HAMAP" id="MF_00712">
    <property type="entry name" value="GcvPA"/>
    <property type="match status" value="1"/>
</dbReference>
<dbReference type="InterPro" id="IPR023010">
    <property type="entry name" value="GcvPA"/>
</dbReference>
<dbReference type="InterPro" id="IPR049315">
    <property type="entry name" value="GDC-P_N"/>
</dbReference>
<dbReference type="InterPro" id="IPR020581">
    <property type="entry name" value="GDC_P"/>
</dbReference>
<dbReference type="InterPro" id="IPR015424">
    <property type="entry name" value="PyrdxlP-dep_Trfase"/>
</dbReference>
<dbReference type="InterPro" id="IPR015421">
    <property type="entry name" value="PyrdxlP-dep_Trfase_major"/>
</dbReference>
<dbReference type="InterPro" id="IPR015422">
    <property type="entry name" value="PyrdxlP-dep_Trfase_small"/>
</dbReference>
<dbReference type="NCBIfam" id="NF001696">
    <property type="entry name" value="PRK00451.1"/>
    <property type="match status" value="1"/>
</dbReference>
<dbReference type="PANTHER" id="PTHR42806">
    <property type="entry name" value="GLYCINE CLEAVAGE SYSTEM P-PROTEIN"/>
    <property type="match status" value="1"/>
</dbReference>
<dbReference type="PANTHER" id="PTHR42806:SF1">
    <property type="entry name" value="GLYCINE DEHYDROGENASE (DECARBOXYLATING)"/>
    <property type="match status" value="1"/>
</dbReference>
<dbReference type="Pfam" id="PF02347">
    <property type="entry name" value="GDC-P"/>
    <property type="match status" value="1"/>
</dbReference>
<dbReference type="PIRSF" id="PIRSF006815">
    <property type="entry name" value="GcvPA"/>
    <property type="match status" value="1"/>
</dbReference>
<dbReference type="SUPFAM" id="SSF53383">
    <property type="entry name" value="PLP-dependent transferases"/>
    <property type="match status" value="1"/>
</dbReference>
<proteinExistence type="inferred from homology"/>
<evidence type="ECO:0000255" key="1">
    <source>
        <dbReference type="HAMAP-Rule" id="MF_00712"/>
    </source>
</evidence>
<feature type="chain" id="PRO_1000062079" description="Probable glycine dehydrogenase (decarboxylating) subunit 1">
    <location>
        <begin position="1"/>
        <end position="448"/>
    </location>
</feature>